<dbReference type="EMBL" id="CP000305">
    <property type="protein sequence ID" value="ABG17889.1"/>
    <property type="molecule type" value="Genomic_DNA"/>
</dbReference>
<dbReference type="EMBL" id="ACNQ01000009">
    <property type="protein sequence ID" value="EEO77001.1"/>
    <property type="molecule type" value="Genomic_DNA"/>
</dbReference>
<dbReference type="RefSeq" id="WP_002211739.1">
    <property type="nucleotide sequence ID" value="NZ_ACNQ01000009.1"/>
</dbReference>
<dbReference type="KEGG" id="ypn:YPN_1559"/>
<dbReference type="HOGENOM" id="CLU_109769_2_0_6"/>
<dbReference type="Proteomes" id="UP000008936">
    <property type="component" value="Chromosome"/>
</dbReference>
<dbReference type="HAMAP" id="MF_00676">
    <property type="entry name" value="UPF0260"/>
    <property type="match status" value="1"/>
</dbReference>
<dbReference type="InterPro" id="IPR005358">
    <property type="entry name" value="Puta_zinc/iron-chelating_dom"/>
</dbReference>
<dbReference type="InterPro" id="IPR008228">
    <property type="entry name" value="UCP006173"/>
</dbReference>
<dbReference type="NCBIfam" id="NF003498">
    <property type="entry name" value="PRK05170.1-1"/>
    <property type="match status" value="1"/>
</dbReference>
<dbReference type="NCBIfam" id="NF003501">
    <property type="entry name" value="PRK05170.1-5"/>
    <property type="match status" value="1"/>
</dbReference>
<dbReference type="NCBIfam" id="NF003507">
    <property type="entry name" value="PRK05170.2-5"/>
    <property type="match status" value="1"/>
</dbReference>
<dbReference type="PANTHER" id="PTHR37421">
    <property type="entry name" value="UPF0260 PROTEIN YCGN"/>
    <property type="match status" value="1"/>
</dbReference>
<dbReference type="PANTHER" id="PTHR37421:SF1">
    <property type="entry name" value="UPF0260 PROTEIN YCGN"/>
    <property type="match status" value="1"/>
</dbReference>
<dbReference type="Pfam" id="PF03692">
    <property type="entry name" value="CxxCxxCC"/>
    <property type="match status" value="1"/>
</dbReference>
<dbReference type="PIRSF" id="PIRSF006173">
    <property type="entry name" value="UCP006173"/>
    <property type="match status" value="1"/>
</dbReference>
<reference key="1">
    <citation type="journal article" date="2006" name="J. Bacteriol.">
        <title>Complete genome sequence of Yersinia pestis strains Antiqua and Nepal516: evidence of gene reduction in an emerging pathogen.</title>
        <authorList>
            <person name="Chain P.S.G."/>
            <person name="Hu P."/>
            <person name="Malfatti S.A."/>
            <person name="Radnedge L."/>
            <person name="Larimer F."/>
            <person name="Vergez L.M."/>
            <person name="Worsham P."/>
            <person name="Chu M.C."/>
            <person name="Andersen G.L."/>
        </authorList>
    </citation>
    <scope>NUCLEOTIDE SEQUENCE [LARGE SCALE GENOMIC DNA]</scope>
    <source>
        <strain>Nepal516</strain>
    </source>
</reference>
<reference key="2">
    <citation type="submission" date="2009-04" db="EMBL/GenBank/DDBJ databases">
        <title>Yersinia pestis Nepal516A whole genome shotgun sequencing project.</title>
        <authorList>
            <person name="Plunkett G. III"/>
            <person name="Anderson B.D."/>
            <person name="Baumler D.J."/>
            <person name="Burland V."/>
            <person name="Cabot E.L."/>
            <person name="Glasner J.D."/>
            <person name="Mau B."/>
            <person name="Neeno-Eckwall E."/>
            <person name="Perna N.T."/>
            <person name="Munk A.C."/>
            <person name="Tapia R."/>
            <person name="Green L.D."/>
            <person name="Rogers Y.C."/>
            <person name="Detter J.C."/>
            <person name="Bruce D.C."/>
            <person name="Brettin T.S."/>
        </authorList>
    </citation>
    <scope>NUCLEOTIDE SEQUENCE [LARGE SCALE GENOMIC DNA]</scope>
    <source>
        <strain>Nepal516</strain>
    </source>
</reference>
<sequence>MSQPPFWQQKTLAEMSDSEWESLCDGCGQCCLNKLIDEDTDEIYFTNVACDQLNIKTCQCSNYERRFELEEDCIKLTRENLVTFAWLPPTCAYRLIGEGHDLPRWHPLLTGSKAAMHGERISVRHIAVRESEVVDWQDHILNKPSWAK</sequence>
<name>Y1559_YERPN</name>
<accession>Q1CJE1</accession>
<accession>C4GSJ1</accession>
<evidence type="ECO:0000255" key="1">
    <source>
        <dbReference type="HAMAP-Rule" id="MF_00676"/>
    </source>
</evidence>
<comment type="similarity">
    <text evidence="1">Belongs to the UPF0260 family.</text>
</comment>
<gene>
    <name type="ordered locus">YPN_1559</name>
    <name type="ORF">YP516_1733</name>
</gene>
<organism>
    <name type="scientific">Yersinia pestis bv. Antiqua (strain Nepal516)</name>
    <dbReference type="NCBI Taxonomy" id="377628"/>
    <lineage>
        <taxon>Bacteria</taxon>
        <taxon>Pseudomonadati</taxon>
        <taxon>Pseudomonadota</taxon>
        <taxon>Gammaproteobacteria</taxon>
        <taxon>Enterobacterales</taxon>
        <taxon>Yersiniaceae</taxon>
        <taxon>Yersinia</taxon>
    </lineage>
</organism>
<protein>
    <recommendedName>
        <fullName evidence="1">UPF0260 protein YPN_1559</fullName>
    </recommendedName>
</protein>
<feature type="chain" id="PRO_1000044819" description="UPF0260 protein YPN_1559">
    <location>
        <begin position="1"/>
        <end position="148"/>
    </location>
</feature>
<proteinExistence type="inferred from homology"/>